<accession>Q9F7B1</accession>
<protein>
    <recommendedName>
        <fullName>Tyrosine-protein kinase wzc</fullName>
        <ecNumber>2.7.10.-</ecNumber>
    </recommendedName>
</protein>
<sequence>MTEKAKQSAAVTGSDEIDIGRLVGTVIEARWWVLGTTAIFALCAVIYTFFATPIYSADALVQIEQNAGNSLVQDINSALANKPPASDAEIQLIRSRLVLGKTVDDLDLDIAVTKNTFPLFGAGWERLMGRHNEMVKVTTFTRPETMSGQIFTLKVLGDKRYQLVSDGGFSAQGVVGQPLNKDGVTMRVEAIDARPDTEFTVSKFSTLGMINNLQNNLTVTETGKDTGVLSLTFTGEDRDQIREILNSITRNYLQQDIARKSEEAGKSLAFLAKQLPEVRSRLDVAENKLNAFRQDKDSVDLPLEAKAVLDSMVNIDAQLNELTFKEAEISKLFTKAHPAYRTLLEKRKALEDEKAKLNGRVTAMPKTQQEIVRLTRDVESGQQVYMQLLNKQQELKITEASTVGDVRIVDPAITQPGVLKPKKALIILGSIILGLMLSIVGVLLRSLFNRGIESPQALEEHGISVYASIPLSEWQKARDSVKTIKGIKRYKQSQLLAVGNPTDLAIEAIRSLRTSLHFAMMQAQNNVLMLTGVSPSIGKTFVCANLAAVISQTHKRVLLIDCDMRKGYTHELLGTNNVDGLSDILAGKGEIASCAKPTAIANFDLIPRGQVPPNPSELLMSERFGELIAWASSRYDLVLIDTPPILAVTDAAIVGRHAGTTLMVARYAVNTLKEVETSLSRFDQNGIQVKGVILNSIFRRATGYQDYGYYEYEYQSDSK</sequence>
<proteinExistence type="inferred from homology"/>
<feature type="chain" id="PRO_0000212356" description="Tyrosine-protein kinase wzc">
    <location>
        <begin position="1"/>
        <end position="719"/>
    </location>
</feature>
<feature type="topological domain" description="Cytoplasmic" evidence="2">
    <location>
        <begin position="1"/>
        <end position="30"/>
    </location>
</feature>
<feature type="transmembrane region" description="Helical" evidence="2">
    <location>
        <begin position="31"/>
        <end position="51"/>
    </location>
</feature>
<feature type="topological domain" description="Periplasmic" evidence="2">
    <location>
        <begin position="52"/>
        <end position="423"/>
    </location>
</feature>
<feature type="transmembrane region" description="Helical" evidence="2">
    <location>
        <begin position="424"/>
        <end position="444"/>
    </location>
</feature>
<feature type="topological domain" description="Cytoplasmic" evidence="2">
    <location>
        <begin position="445"/>
        <end position="719"/>
    </location>
</feature>
<feature type="modified residue" description="Phosphotyrosine; by autocatalysis" evidence="1">
    <location>
        <position position="568"/>
    </location>
</feature>
<feature type="modified residue" description="Phosphotyrosine" evidence="1">
    <location>
        <position position="707"/>
    </location>
</feature>
<feature type="modified residue" description="Phosphotyrosine" evidence="1">
    <location>
        <position position="709"/>
    </location>
</feature>
<feature type="modified residue" description="Phosphotyrosine" evidence="1">
    <location>
        <position position="710"/>
    </location>
</feature>
<feature type="modified residue" description="Phosphotyrosine" evidence="1">
    <location>
        <position position="712"/>
    </location>
</feature>
<feature type="modified residue" description="Phosphotyrosine" evidence="1">
    <location>
        <position position="714"/>
    </location>
</feature>
<organism>
    <name type="scientific">Salmonella typhimurium (strain LT2 / SGSC1412 / ATCC 700720)</name>
    <dbReference type="NCBI Taxonomy" id="99287"/>
    <lineage>
        <taxon>Bacteria</taxon>
        <taxon>Pseudomonadati</taxon>
        <taxon>Pseudomonadota</taxon>
        <taxon>Gammaproteobacteria</taxon>
        <taxon>Enterobacterales</taxon>
        <taxon>Enterobacteriaceae</taxon>
        <taxon>Salmonella</taxon>
    </lineage>
</organism>
<dbReference type="EC" id="2.7.10.-"/>
<dbReference type="EMBL" id="AH009899">
    <property type="protein sequence ID" value="AAG24806.1"/>
    <property type="molecule type" value="Genomic_DNA"/>
</dbReference>
<dbReference type="EMBL" id="AE006468">
    <property type="protein sequence ID" value="AAL21020.1"/>
    <property type="molecule type" value="Genomic_DNA"/>
</dbReference>
<dbReference type="RefSeq" id="NP_461061.1">
    <property type="nucleotide sequence ID" value="NC_003197.2"/>
</dbReference>
<dbReference type="RefSeq" id="WP_000136405.1">
    <property type="nucleotide sequence ID" value="NC_003197.2"/>
</dbReference>
<dbReference type="SMR" id="Q9F7B1"/>
<dbReference type="STRING" id="99287.STM2116"/>
<dbReference type="PaxDb" id="99287-STM2116"/>
<dbReference type="GeneID" id="1253637"/>
<dbReference type="KEGG" id="stm:STM2116"/>
<dbReference type="PATRIC" id="fig|99287.12.peg.2238"/>
<dbReference type="HOGENOM" id="CLU_009912_0_0_6"/>
<dbReference type="OMA" id="TKDHPAY"/>
<dbReference type="PhylomeDB" id="Q9F7B1"/>
<dbReference type="BioCyc" id="SENT99287:STM2116-MONOMER"/>
<dbReference type="BRENDA" id="2.7.10.1">
    <property type="organism ID" value="5542"/>
</dbReference>
<dbReference type="UniPathway" id="UPA00631"/>
<dbReference type="Proteomes" id="UP000001014">
    <property type="component" value="Chromosome"/>
</dbReference>
<dbReference type="GO" id="GO:0005886">
    <property type="term" value="C:plasma membrane"/>
    <property type="evidence" value="ECO:0000318"/>
    <property type="project" value="GO_Central"/>
</dbReference>
<dbReference type="GO" id="GO:0005524">
    <property type="term" value="F:ATP binding"/>
    <property type="evidence" value="ECO:0007669"/>
    <property type="project" value="UniProtKB-KW"/>
</dbReference>
<dbReference type="GO" id="GO:0004713">
    <property type="term" value="F:protein tyrosine kinase activity"/>
    <property type="evidence" value="ECO:0000318"/>
    <property type="project" value="GO_Central"/>
</dbReference>
<dbReference type="GO" id="GO:0000271">
    <property type="term" value="P:polysaccharide biosynthetic process"/>
    <property type="evidence" value="ECO:0007669"/>
    <property type="project" value="UniProtKB-KW"/>
</dbReference>
<dbReference type="CDD" id="cd05387">
    <property type="entry name" value="BY-kinase"/>
    <property type="match status" value="1"/>
</dbReference>
<dbReference type="FunFam" id="3.40.50.300:FF:000527">
    <property type="entry name" value="Tyrosine-protein kinase etk"/>
    <property type="match status" value="1"/>
</dbReference>
<dbReference type="Gene3D" id="3.40.50.300">
    <property type="entry name" value="P-loop containing nucleotide triphosphate hydrolases"/>
    <property type="match status" value="1"/>
</dbReference>
<dbReference type="InterPro" id="IPR025669">
    <property type="entry name" value="AAA_dom"/>
</dbReference>
<dbReference type="InterPro" id="IPR050445">
    <property type="entry name" value="Bact_polysacc_biosynth/exp"/>
</dbReference>
<dbReference type="InterPro" id="IPR032807">
    <property type="entry name" value="GNVR"/>
</dbReference>
<dbReference type="InterPro" id="IPR003856">
    <property type="entry name" value="LPS_length_determ_N_term"/>
</dbReference>
<dbReference type="InterPro" id="IPR027417">
    <property type="entry name" value="P-loop_NTPase"/>
</dbReference>
<dbReference type="InterPro" id="IPR005702">
    <property type="entry name" value="Wzc-like_C"/>
</dbReference>
<dbReference type="NCBIfam" id="TIGR01007">
    <property type="entry name" value="eps_fam"/>
    <property type="match status" value="1"/>
</dbReference>
<dbReference type="NCBIfam" id="NF008568">
    <property type="entry name" value="PRK11519.1"/>
    <property type="match status" value="1"/>
</dbReference>
<dbReference type="PANTHER" id="PTHR32309">
    <property type="entry name" value="TYROSINE-PROTEIN KINASE"/>
    <property type="match status" value="1"/>
</dbReference>
<dbReference type="PANTHER" id="PTHR32309:SF32">
    <property type="entry name" value="TYROSINE-PROTEIN KINASE ETK-RELATED"/>
    <property type="match status" value="1"/>
</dbReference>
<dbReference type="Pfam" id="PF13614">
    <property type="entry name" value="AAA_31"/>
    <property type="match status" value="1"/>
</dbReference>
<dbReference type="Pfam" id="PF13807">
    <property type="entry name" value="GNVR"/>
    <property type="match status" value="1"/>
</dbReference>
<dbReference type="Pfam" id="PF23607">
    <property type="entry name" value="WZC_N"/>
    <property type="match status" value="1"/>
</dbReference>
<dbReference type="Pfam" id="PF02706">
    <property type="entry name" value="Wzz"/>
    <property type="match status" value="1"/>
</dbReference>
<dbReference type="SUPFAM" id="SSF52540">
    <property type="entry name" value="P-loop containing nucleoside triphosphate hydrolases"/>
    <property type="match status" value="1"/>
</dbReference>
<evidence type="ECO:0000250" key="1"/>
<evidence type="ECO:0000255" key="2"/>
<evidence type="ECO:0000305" key="3"/>
<name>WZC_SALTY</name>
<keyword id="KW-0067">ATP-binding</keyword>
<keyword id="KW-0997">Cell inner membrane</keyword>
<keyword id="KW-1003">Cell membrane</keyword>
<keyword id="KW-0270">Exopolysaccharide synthesis</keyword>
<keyword id="KW-0418">Kinase</keyword>
<keyword id="KW-0472">Membrane</keyword>
<keyword id="KW-0547">Nucleotide-binding</keyword>
<keyword id="KW-0597">Phosphoprotein</keyword>
<keyword id="KW-1185">Reference proteome</keyword>
<keyword id="KW-0808">Transferase</keyword>
<keyword id="KW-0812">Transmembrane</keyword>
<keyword id="KW-1133">Transmembrane helix</keyword>
<keyword id="KW-0829">Tyrosine-protein kinase</keyword>
<comment type="function">
    <text evidence="1">Required for the extracellular polysaccharide colanic acid synthesis. The autophosphorylated form is inactive. Probably involved in the export of colanic acid from the cell to medium (By similarity).</text>
</comment>
<comment type="catalytic activity">
    <reaction>
        <text>L-tyrosyl-[protein] + ATP = O-phospho-L-tyrosyl-[protein] + ADP + H(+)</text>
        <dbReference type="Rhea" id="RHEA:10596"/>
        <dbReference type="Rhea" id="RHEA-COMP:10136"/>
        <dbReference type="Rhea" id="RHEA-COMP:20101"/>
        <dbReference type="ChEBI" id="CHEBI:15378"/>
        <dbReference type="ChEBI" id="CHEBI:30616"/>
        <dbReference type="ChEBI" id="CHEBI:46858"/>
        <dbReference type="ChEBI" id="CHEBI:61978"/>
        <dbReference type="ChEBI" id="CHEBI:456216"/>
    </reaction>
</comment>
<comment type="activity regulation">
    <text evidence="1">Dephosphorylated and activated by wzb.</text>
</comment>
<comment type="pathway">
    <text>Glycan metabolism; exopolysaccharide biosynthesis.</text>
</comment>
<comment type="subcellular location">
    <subcellularLocation>
        <location evidence="1">Cell inner membrane</location>
        <topology evidence="1">Multi-pass membrane protein</topology>
    </subcellularLocation>
</comment>
<comment type="PTM">
    <text evidence="1">Autophosphorylated. Seems to be phosphorylated through a cooperative two-step mechanism. First, Tyr-568 is phosphorylated in an intramolecular reaction that generates a significant increase of protein kinase activity. Then Tyr-707, Tyr-709, Tyr-710, Tyr-712 and Tyr-714 are phosphorylated in an intermolecular Tyr-568-dependent reaction (By similarity).</text>
</comment>
<comment type="similarity">
    <text evidence="3">Belongs to the etk/wzc family.</text>
</comment>
<reference key="1">
    <citation type="journal article" date="2000" name="FEMS Microbiol. Lett.">
        <title>The colanic acid gene cluster of Salmonella enterica has a complex history.</title>
        <authorList>
            <person name="Stevenson G."/>
            <person name="Lan R."/>
            <person name="Reeves P.R."/>
        </authorList>
    </citation>
    <scope>NUCLEOTIDE SEQUENCE [GENOMIC DNA]</scope>
    <source>
        <strain>LT2</strain>
    </source>
</reference>
<reference key="2">
    <citation type="journal article" date="2001" name="Nature">
        <title>Complete genome sequence of Salmonella enterica serovar Typhimurium LT2.</title>
        <authorList>
            <person name="McClelland M."/>
            <person name="Sanderson K.E."/>
            <person name="Spieth J."/>
            <person name="Clifton S.W."/>
            <person name="Latreille P."/>
            <person name="Courtney L."/>
            <person name="Porwollik S."/>
            <person name="Ali J."/>
            <person name="Dante M."/>
            <person name="Du F."/>
            <person name="Hou S."/>
            <person name="Layman D."/>
            <person name="Leonard S."/>
            <person name="Nguyen C."/>
            <person name="Scott K."/>
            <person name="Holmes A."/>
            <person name="Grewal N."/>
            <person name="Mulvaney E."/>
            <person name="Ryan E."/>
            <person name="Sun H."/>
            <person name="Florea L."/>
            <person name="Miller W."/>
            <person name="Stoneking T."/>
            <person name="Nhan M."/>
            <person name="Waterston R."/>
            <person name="Wilson R.K."/>
        </authorList>
    </citation>
    <scope>NUCLEOTIDE SEQUENCE [LARGE SCALE GENOMIC DNA]</scope>
    <source>
        <strain>LT2 / SGSC1412 / ATCC 700720</strain>
    </source>
</reference>
<gene>
    <name type="primary">wzc</name>
    <name type="ordered locus">STM2116</name>
</gene>